<reference key="1">
    <citation type="submission" date="2008-02" db="EMBL/GenBank/DDBJ databases">
        <title>Complete sequence of Pseudomonas putida W619.</title>
        <authorList>
            <person name="Copeland A."/>
            <person name="Lucas S."/>
            <person name="Lapidus A."/>
            <person name="Barry K."/>
            <person name="Detter J.C."/>
            <person name="Glavina del Rio T."/>
            <person name="Dalin E."/>
            <person name="Tice H."/>
            <person name="Pitluck S."/>
            <person name="Chain P."/>
            <person name="Malfatti S."/>
            <person name="Shin M."/>
            <person name="Vergez L."/>
            <person name="Schmutz J."/>
            <person name="Larimer F."/>
            <person name="Land M."/>
            <person name="Hauser L."/>
            <person name="Kyrpides N."/>
            <person name="Kim E."/>
            <person name="Taghavi S."/>
            <person name="Vangronsveld D."/>
            <person name="van der Lelie D."/>
            <person name="Richardson P."/>
        </authorList>
    </citation>
    <scope>NUCLEOTIDE SEQUENCE [LARGE SCALE GENOMIC DNA]</scope>
    <source>
        <strain>W619</strain>
    </source>
</reference>
<comment type="function">
    <text evidence="1">Catalyzes the transfer of the diacylglyceryl group from phosphatidylglycerol to the sulfhydryl group of the N-terminal cysteine of a prolipoprotein, the first step in the formation of mature lipoproteins.</text>
</comment>
<comment type="catalytic activity">
    <reaction evidence="1">
        <text>L-cysteinyl-[prolipoprotein] + a 1,2-diacyl-sn-glycero-3-phospho-(1'-sn-glycerol) = an S-1,2-diacyl-sn-glyceryl-L-cysteinyl-[prolipoprotein] + sn-glycerol 1-phosphate + H(+)</text>
        <dbReference type="Rhea" id="RHEA:56712"/>
        <dbReference type="Rhea" id="RHEA-COMP:14679"/>
        <dbReference type="Rhea" id="RHEA-COMP:14680"/>
        <dbReference type="ChEBI" id="CHEBI:15378"/>
        <dbReference type="ChEBI" id="CHEBI:29950"/>
        <dbReference type="ChEBI" id="CHEBI:57685"/>
        <dbReference type="ChEBI" id="CHEBI:64716"/>
        <dbReference type="ChEBI" id="CHEBI:140658"/>
        <dbReference type="EC" id="2.5.1.145"/>
    </reaction>
</comment>
<comment type="pathway">
    <text evidence="1">Protein modification; lipoprotein biosynthesis (diacylglyceryl transfer).</text>
</comment>
<comment type="subcellular location">
    <subcellularLocation>
        <location evidence="1">Cell inner membrane</location>
        <topology evidence="1">Multi-pass membrane protein</topology>
    </subcellularLocation>
</comment>
<comment type="similarity">
    <text evidence="1">Belongs to the Lgt family.</text>
</comment>
<name>LGT_PSEPW</name>
<organism>
    <name type="scientific">Pseudomonas putida (strain W619)</name>
    <dbReference type="NCBI Taxonomy" id="390235"/>
    <lineage>
        <taxon>Bacteria</taxon>
        <taxon>Pseudomonadati</taxon>
        <taxon>Pseudomonadota</taxon>
        <taxon>Gammaproteobacteria</taxon>
        <taxon>Pseudomonadales</taxon>
        <taxon>Pseudomonadaceae</taxon>
        <taxon>Pseudomonas</taxon>
    </lineage>
</organism>
<keyword id="KW-0997">Cell inner membrane</keyword>
<keyword id="KW-1003">Cell membrane</keyword>
<keyword id="KW-0472">Membrane</keyword>
<keyword id="KW-0808">Transferase</keyword>
<keyword id="KW-0812">Transmembrane</keyword>
<keyword id="KW-1133">Transmembrane helix</keyword>
<dbReference type="EC" id="2.5.1.145" evidence="1"/>
<dbReference type="EMBL" id="CP000949">
    <property type="protein sequence ID" value="ACA70829.1"/>
    <property type="molecule type" value="Genomic_DNA"/>
</dbReference>
<dbReference type="SMR" id="B1J2P4"/>
<dbReference type="STRING" id="390235.PputW619_0323"/>
<dbReference type="KEGG" id="ppw:PputW619_0323"/>
<dbReference type="eggNOG" id="COG0682">
    <property type="taxonomic scope" value="Bacteria"/>
</dbReference>
<dbReference type="HOGENOM" id="CLU_013386_1_0_6"/>
<dbReference type="OrthoDB" id="871140at2"/>
<dbReference type="UniPathway" id="UPA00664"/>
<dbReference type="GO" id="GO:0005886">
    <property type="term" value="C:plasma membrane"/>
    <property type="evidence" value="ECO:0007669"/>
    <property type="project" value="UniProtKB-SubCell"/>
</dbReference>
<dbReference type="GO" id="GO:0008961">
    <property type="term" value="F:phosphatidylglycerol-prolipoprotein diacylglyceryl transferase activity"/>
    <property type="evidence" value="ECO:0007669"/>
    <property type="project" value="UniProtKB-UniRule"/>
</dbReference>
<dbReference type="GO" id="GO:0042158">
    <property type="term" value="P:lipoprotein biosynthetic process"/>
    <property type="evidence" value="ECO:0007669"/>
    <property type="project" value="UniProtKB-UniRule"/>
</dbReference>
<dbReference type="HAMAP" id="MF_01147">
    <property type="entry name" value="Lgt"/>
    <property type="match status" value="1"/>
</dbReference>
<dbReference type="InterPro" id="IPR001640">
    <property type="entry name" value="Lgt"/>
</dbReference>
<dbReference type="NCBIfam" id="TIGR00544">
    <property type="entry name" value="lgt"/>
    <property type="match status" value="1"/>
</dbReference>
<dbReference type="PANTHER" id="PTHR30589:SF0">
    <property type="entry name" value="PHOSPHATIDYLGLYCEROL--PROLIPOPROTEIN DIACYLGLYCERYL TRANSFERASE"/>
    <property type="match status" value="1"/>
</dbReference>
<dbReference type="PANTHER" id="PTHR30589">
    <property type="entry name" value="PROLIPOPROTEIN DIACYLGLYCERYL TRANSFERASE"/>
    <property type="match status" value="1"/>
</dbReference>
<dbReference type="Pfam" id="PF01790">
    <property type="entry name" value="LGT"/>
    <property type="match status" value="1"/>
</dbReference>
<dbReference type="PROSITE" id="PS01311">
    <property type="entry name" value="LGT"/>
    <property type="match status" value="1"/>
</dbReference>
<feature type="chain" id="PRO_1000137446" description="Phosphatidylglycerol--prolipoprotein diacylglyceryl transferase">
    <location>
        <begin position="1"/>
        <end position="269"/>
    </location>
</feature>
<feature type="transmembrane region" description="Helical" evidence="1">
    <location>
        <begin position="17"/>
        <end position="37"/>
    </location>
</feature>
<feature type="transmembrane region" description="Helical" evidence="1">
    <location>
        <begin position="56"/>
        <end position="76"/>
    </location>
</feature>
<feature type="transmembrane region" description="Helical" evidence="1">
    <location>
        <begin position="92"/>
        <end position="112"/>
    </location>
</feature>
<feature type="transmembrane region" description="Helical" evidence="1">
    <location>
        <begin position="120"/>
        <end position="140"/>
    </location>
</feature>
<feature type="transmembrane region" description="Helical" evidence="1">
    <location>
        <begin position="174"/>
        <end position="194"/>
    </location>
</feature>
<feature type="transmembrane region" description="Helical" evidence="1">
    <location>
        <begin position="202"/>
        <end position="222"/>
    </location>
</feature>
<feature type="transmembrane region" description="Helical" evidence="1">
    <location>
        <begin position="237"/>
        <end position="257"/>
    </location>
</feature>
<feature type="binding site" evidence="1">
    <location>
        <position position="139"/>
    </location>
    <ligand>
        <name>a 1,2-diacyl-sn-glycero-3-phospho-(1'-sn-glycerol)</name>
        <dbReference type="ChEBI" id="CHEBI:64716"/>
    </ligand>
</feature>
<gene>
    <name evidence="1" type="primary">lgt</name>
    <name type="ordered locus">PputW619_0323</name>
</gene>
<proteinExistence type="inferred from homology"/>
<evidence type="ECO:0000255" key="1">
    <source>
        <dbReference type="HAMAP-Rule" id="MF_01147"/>
    </source>
</evidence>
<sequence length="269" mass="30259">MLPYPQIDPVAVALGPLKIHWYGLMYLIGIGGAWLLASRRLNRFDPTWSREKLSDLVFWLSMGVIVGGRLGYVLFYDLHAYLANPTLIFEVWKGGMSFHGGFIGVMLAALWFGKRNNKSFFELMDFVAPLVPIGLGAGRIGNFINAELWGKATDVPWAMVFPPFSDPAQLPRHPSQLYQFALEGVALFVILWLYSRKPRPTMAVSGMFALFYGIFRFIVEFVRVPDAQLGYIAFGWLTMGQLLCVPMIVGGLFLIWLAYNRKPTAKPAV</sequence>
<protein>
    <recommendedName>
        <fullName evidence="1">Phosphatidylglycerol--prolipoprotein diacylglyceryl transferase</fullName>
        <ecNumber evidence="1">2.5.1.145</ecNumber>
    </recommendedName>
</protein>
<accession>B1J2P4</accession>